<comment type="function">
    <text evidence="3">Has antifungal activity against C.gloeosporioides but not against B.cinerea and Fusarium sp. or against various yeasts. Has no antibacterial activity.</text>
</comment>
<comment type="subunit">
    <text evidence="3">Heterodimer; disulfide-linked.</text>
</comment>
<comment type="PTM">
    <text evidence="3">Disulfide bonds.</text>
</comment>
<comment type="mass spectrometry"/>
<comment type="similarity">
    <text evidence="1">Belongs to the 2S seed storage albumins family.</text>
</comment>
<evidence type="ECO:0000255" key="1"/>
<evidence type="ECO:0000256" key="2">
    <source>
        <dbReference type="SAM" id="MobiDB-lite"/>
    </source>
</evidence>
<evidence type="ECO:0000269" key="3">
    <source>
    </source>
</evidence>
<evidence type="ECO:0000303" key="4">
    <source>
    </source>
</evidence>
<evidence type="ECO:0000305" key="5"/>
<dbReference type="SMR" id="B3EWF0"/>
<dbReference type="GO" id="GO:0050832">
    <property type="term" value="P:defense response to fungus"/>
    <property type="evidence" value="ECO:0007669"/>
    <property type="project" value="UniProtKB-KW"/>
</dbReference>
<dbReference type="GO" id="GO:0031640">
    <property type="term" value="P:killing of cells of another organism"/>
    <property type="evidence" value="ECO:0007669"/>
    <property type="project" value="UniProtKB-KW"/>
</dbReference>
<feature type="chain" id="PRO_0000415954" description="Antifungal protein 1">
    <location>
        <begin position="1"/>
        <end position="31" status="greater than"/>
    </location>
</feature>
<feature type="region of interest" description="Disordered" evidence="2">
    <location>
        <begin position="1"/>
        <end position="31"/>
    </location>
</feature>
<feature type="compositionally biased region" description="Basic and acidic residues" evidence="2">
    <location>
        <begin position="1"/>
        <end position="10"/>
    </location>
</feature>
<feature type="compositionally biased region" description="Basic and acidic residues" evidence="2">
    <location>
        <begin position="18"/>
        <end position="31"/>
    </location>
</feature>
<feature type="non-terminal residue" evidence="4">
    <location>
        <position position="31"/>
    </location>
</feature>
<name>AFP1_PASAL</name>
<accession>B3EWF0</accession>
<reference evidence="5" key="1">
    <citation type="journal article" date="2011" name="Peptides">
        <title>Identification of a Passiflora alata Curtis dimeric peptide showing identity with 2S albumins.</title>
        <authorList>
            <person name="Ribeiro S.M."/>
            <person name="Almeida R.G."/>
            <person name="Pereira C.A."/>
            <person name="Moreira J.S."/>
            <person name="Pinto M.F."/>
            <person name="Oliveira A.C."/>
            <person name="Vasconcelos I.M."/>
            <person name="Oliveira J.T."/>
            <person name="Santos M.O."/>
            <person name="Dias S.C."/>
            <person name="Franco O.L."/>
        </authorList>
    </citation>
    <scope>PROTEIN SEQUENCE</scope>
    <scope>FUNCTION</scope>
    <scope>SUBUNIT</scope>
    <scope>DISULFIDE BONDS</scope>
    <scope>MASS SPECTROMETRY</scope>
    <source>
        <tissue evidence="3">Seed</tissue>
    </source>
</reference>
<proteinExistence type="evidence at protein level"/>
<organism>
    <name type="scientific">Passiflora alata</name>
    <name type="common">Winged-stem passion flower</name>
    <name type="synonym">Fragrant granadilla</name>
    <dbReference type="NCBI Taxonomy" id="159422"/>
    <lineage>
        <taxon>Eukaryota</taxon>
        <taxon>Viridiplantae</taxon>
        <taxon>Streptophyta</taxon>
        <taxon>Embryophyta</taxon>
        <taxon>Tracheophyta</taxon>
        <taxon>Spermatophyta</taxon>
        <taxon>Magnoliopsida</taxon>
        <taxon>eudicotyledons</taxon>
        <taxon>Gunneridae</taxon>
        <taxon>Pentapetalae</taxon>
        <taxon>rosids</taxon>
        <taxon>fabids</taxon>
        <taxon>Malpighiales</taxon>
        <taxon>Passifloraceae</taxon>
        <taxon>Passiflora</taxon>
    </lineage>
</organism>
<sequence>PGAGSQEERMQGQMEGQDFSHEERFLSMVRE</sequence>
<keyword id="KW-0929">Antimicrobial</keyword>
<keyword id="KW-0903">Direct protein sequencing</keyword>
<keyword id="KW-1015">Disulfide bond</keyword>
<keyword id="KW-0295">Fungicide</keyword>
<keyword id="KW-0611">Plant defense</keyword>
<protein>
    <recommendedName>
        <fullName evidence="4">Antifungal protein 1</fullName>
        <shortName evidence="4">Pa-AFP1</shortName>
    </recommendedName>
</protein>